<organism>
    <name type="scientific">Oryctolagus cuniculus</name>
    <name type="common">Rabbit</name>
    <dbReference type="NCBI Taxonomy" id="9986"/>
    <lineage>
        <taxon>Eukaryota</taxon>
        <taxon>Metazoa</taxon>
        <taxon>Chordata</taxon>
        <taxon>Craniata</taxon>
        <taxon>Vertebrata</taxon>
        <taxon>Euteleostomi</taxon>
        <taxon>Mammalia</taxon>
        <taxon>Eutheria</taxon>
        <taxon>Euarchontoglires</taxon>
        <taxon>Glires</taxon>
        <taxon>Lagomorpha</taxon>
        <taxon>Leporidae</taxon>
        <taxon>Oryctolagus</taxon>
    </lineage>
</organism>
<sequence length="180" mass="21331">MRFFVFTCLLAVALAKNGIEQRSASEEIVSFYQEKYKQDSNAAIYPTNQETPSVSSSEESVEVQTEKDEQIEEENVYLKQLKRIKQIFQKFYIPQYPEVYQQQIVMNPWKHVKTTTYPVPIPETTRIPLEEIVKKIVEMIKFNQLHQFVIPQYVQALQQRIAMNPWHHVTPFRSFPVLNF</sequence>
<protein>
    <recommendedName>
        <fullName>Alpha-S2-casein-like A</fullName>
    </recommendedName>
    <alternativeName>
        <fullName>Alpha-S2A-casein</fullName>
    </alternativeName>
    <alternativeName>
        <fullName>Casein alpha S2-like A</fullName>
    </alternativeName>
</protein>
<evidence type="ECO:0000250" key="1">
    <source>
        <dbReference type="UniProtKB" id="Q02862"/>
    </source>
</evidence>
<evidence type="ECO:0000255" key="2"/>
<evidence type="ECO:0000256" key="3">
    <source>
        <dbReference type="SAM" id="MobiDB-lite"/>
    </source>
</evidence>
<evidence type="ECO:0000305" key="4"/>
<accession>P50418</accession>
<proteinExistence type="evidence at transcript level"/>
<gene>
    <name type="primary">CSN1S2A</name>
</gene>
<comment type="function">
    <text>Important role in the capacity of milk to transport calcium phosphate.</text>
</comment>
<comment type="subcellular location">
    <subcellularLocation>
        <location>Secreted</location>
    </subcellularLocation>
</comment>
<comment type="tissue specificity">
    <text>Mammary gland specific. Secreted in milk.</text>
</comment>
<comment type="similarity">
    <text evidence="4">Belongs to the alpha-casein family.</text>
</comment>
<reference key="1">
    <citation type="journal article" date="1993" name="Biochem. J.">
        <title>Characterization of two novel casein transcripts in rabbit mammary gland.</title>
        <authorList>
            <person name="Dawson S.P."/>
            <person name="Wilde C.J."/>
            <person name="Tighe P.J."/>
            <person name="Mayer R.J."/>
        </authorList>
    </citation>
    <scope>NUCLEOTIDE SEQUENCE [MRNA]</scope>
    <source>
        <strain>New Zealand white</strain>
        <tissue>Mammary gland</tissue>
    </source>
</reference>
<keyword id="KW-0494">Milk protein</keyword>
<keyword id="KW-0597">Phosphoprotein</keyword>
<keyword id="KW-1185">Reference proteome</keyword>
<keyword id="KW-0964">Secreted</keyword>
<keyword id="KW-0732">Signal</keyword>
<dbReference type="EMBL" id="X76907">
    <property type="protein sequence ID" value="CAA54228.1"/>
    <property type="molecule type" value="mRNA"/>
</dbReference>
<dbReference type="PIR" id="S39775">
    <property type="entry name" value="S39775"/>
</dbReference>
<dbReference type="RefSeq" id="NP_001075869.1">
    <property type="nucleotide sequence ID" value="NM_001082400.1"/>
</dbReference>
<dbReference type="SMR" id="P50418"/>
<dbReference type="Allergome" id="2149">
    <property type="allergen name" value="Ory c 8"/>
</dbReference>
<dbReference type="PaxDb" id="9986-ENSOCUP00000017537"/>
<dbReference type="GeneID" id="100009287"/>
<dbReference type="KEGG" id="ocu:100009287"/>
<dbReference type="CTD" id="12993"/>
<dbReference type="eggNOG" id="ENOG502TDWX">
    <property type="taxonomic scope" value="Eukaryota"/>
</dbReference>
<dbReference type="HOGENOM" id="CLU_1503029_0_0_1"/>
<dbReference type="InParanoid" id="P50418"/>
<dbReference type="OMA" id="QRIAMNP"/>
<dbReference type="OrthoDB" id="9564348at2759"/>
<dbReference type="TreeFam" id="TF339561"/>
<dbReference type="Proteomes" id="UP000001811">
    <property type="component" value="Unplaced"/>
</dbReference>
<dbReference type="GO" id="GO:0005615">
    <property type="term" value="C:extracellular space"/>
    <property type="evidence" value="ECO:0007669"/>
    <property type="project" value="TreeGrafter"/>
</dbReference>
<dbReference type="GO" id="GO:0042803">
    <property type="term" value="F:protein homodimerization activity"/>
    <property type="evidence" value="ECO:0007669"/>
    <property type="project" value="TreeGrafter"/>
</dbReference>
<dbReference type="GO" id="GO:0035375">
    <property type="term" value="F:zymogen binding"/>
    <property type="evidence" value="ECO:0007669"/>
    <property type="project" value="TreeGrafter"/>
</dbReference>
<dbReference type="InterPro" id="IPR011175">
    <property type="entry name" value="Alpha-s2_casein"/>
</dbReference>
<dbReference type="InterPro" id="IPR031305">
    <property type="entry name" value="Casein_CS"/>
</dbReference>
<dbReference type="PANTHER" id="PTHR16656:SF7">
    <property type="entry name" value="ALPHA-S2-CASEIN-LIKE A"/>
    <property type="match status" value="1"/>
</dbReference>
<dbReference type="PANTHER" id="PTHR16656">
    <property type="entry name" value="ALPHA-S2-CASEIN-LIKE B"/>
    <property type="match status" value="1"/>
</dbReference>
<dbReference type="PROSITE" id="PS00306">
    <property type="entry name" value="CASEIN_ALPHA_BETA"/>
    <property type="match status" value="1"/>
</dbReference>
<feature type="signal peptide" evidence="2">
    <location>
        <begin position="1"/>
        <end position="15"/>
    </location>
</feature>
<feature type="chain" id="PRO_0000004455" description="Alpha-S2-casein-like A">
    <location>
        <begin position="16"/>
        <end position="180"/>
    </location>
</feature>
<feature type="region of interest" description="Disordered" evidence="3">
    <location>
        <begin position="46"/>
        <end position="66"/>
    </location>
</feature>
<feature type="modified residue" description="Phosphoserine" evidence="1">
    <location>
        <position position="23"/>
    </location>
</feature>
<feature type="modified residue" description="Phosphoserine" evidence="1">
    <location>
        <position position="25"/>
    </location>
</feature>
<name>CS2LA_RABIT</name>